<reference key="1">
    <citation type="journal article" date="2006" name="Antioxid. Redox Signal.">
        <title>Thioredoxin networks in the malarial parasite Plasmodium falciparum.</title>
        <authorList>
            <person name="Nickel C."/>
            <person name="Rahlfs S."/>
            <person name="Deponte M."/>
            <person name="Koncarevic S."/>
            <person name="Becker K."/>
        </authorList>
    </citation>
    <scope>NUCLEOTIDE SEQUENCE [MRNA] (ISOFORM 2)</scope>
    <scope>FUNCTION</scope>
    <scope>CATALYTIC ACTIVITY</scope>
</reference>
<reference key="2">
    <citation type="journal article" date="2002" name="Nature">
        <title>Genome sequence of the human malaria parasite Plasmodium falciparum.</title>
        <authorList>
            <person name="Gardner M.J."/>
            <person name="Hall N."/>
            <person name="Fung E."/>
            <person name="White O."/>
            <person name="Berriman M."/>
            <person name="Hyman R.W."/>
            <person name="Carlton J.M."/>
            <person name="Pain A."/>
            <person name="Nelson K.E."/>
            <person name="Bowman S."/>
            <person name="Paulsen I.T."/>
            <person name="James K.D."/>
            <person name="Eisen J.A."/>
            <person name="Rutherford K.M."/>
            <person name="Salzberg S.L."/>
            <person name="Craig A."/>
            <person name="Kyes S."/>
            <person name="Chan M.-S."/>
            <person name="Nene V."/>
            <person name="Shallom S.J."/>
            <person name="Suh B."/>
            <person name="Peterson J."/>
            <person name="Angiuoli S."/>
            <person name="Pertea M."/>
            <person name="Allen J."/>
            <person name="Selengut J."/>
            <person name="Haft D."/>
            <person name="Mather M.W."/>
            <person name="Vaidya A.B."/>
            <person name="Martin D.M.A."/>
            <person name="Fairlamb A.H."/>
            <person name="Fraunholz M.J."/>
            <person name="Roos D.S."/>
            <person name="Ralph S.A."/>
            <person name="McFadden G.I."/>
            <person name="Cummings L.M."/>
            <person name="Subramanian G.M."/>
            <person name="Mungall C."/>
            <person name="Venter J.C."/>
            <person name="Carucci D.J."/>
            <person name="Hoffman S.L."/>
            <person name="Newbold C."/>
            <person name="Davis R.W."/>
            <person name="Fraser C.M."/>
            <person name="Barrell B.G."/>
        </authorList>
    </citation>
    <scope>NUCLEOTIDE SEQUENCE [LARGE SCALE GENOMIC DNA]</scope>
    <source>
        <strain>3D7</strain>
    </source>
</reference>
<reference key="3">
    <citation type="journal article" date="2002" name="Nature">
        <title>Sequence of Plasmodium falciparum chromosomes 1, 3-9 and 13.</title>
        <authorList>
            <person name="Hall N."/>
            <person name="Pain A."/>
            <person name="Berriman M."/>
            <person name="Churcher C.M."/>
            <person name="Harris B."/>
            <person name="Harris D."/>
            <person name="Mungall K.L."/>
            <person name="Bowman S."/>
            <person name="Atkin R."/>
            <person name="Baker S."/>
            <person name="Barron A."/>
            <person name="Brooks K."/>
            <person name="Buckee C.O."/>
            <person name="Burrows C."/>
            <person name="Cherevach I."/>
            <person name="Chillingworth C."/>
            <person name="Chillingworth T."/>
            <person name="Christodoulou Z."/>
            <person name="Clark L."/>
            <person name="Clark R."/>
            <person name="Corton C."/>
            <person name="Cronin A."/>
            <person name="Davies R.M."/>
            <person name="Davis P."/>
            <person name="Dear P."/>
            <person name="Dearden F."/>
            <person name="Doggett J."/>
            <person name="Feltwell T."/>
            <person name="Goble A."/>
            <person name="Goodhead I."/>
            <person name="Gwilliam R."/>
            <person name="Hamlin N."/>
            <person name="Hance Z."/>
            <person name="Harper D."/>
            <person name="Hauser H."/>
            <person name="Hornsby T."/>
            <person name="Holroyd S."/>
            <person name="Horrocks P."/>
            <person name="Humphray S."/>
            <person name="Jagels K."/>
            <person name="James K.D."/>
            <person name="Johnson D."/>
            <person name="Kerhornou A."/>
            <person name="Knights A."/>
            <person name="Konfortov B."/>
            <person name="Kyes S."/>
            <person name="Larke N."/>
            <person name="Lawson D."/>
            <person name="Lennard N."/>
            <person name="Line A."/>
            <person name="Maddison M."/>
            <person name="Mclean J."/>
            <person name="Mooney P."/>
            <person name="Moule S."/>
            <person name="Murphy L."/>
            <person name="Oliver K."/>
            <person name="Ormond D."/>
            <person name="Price C."/>
            <person name="Quail M.A."/>
            <person name="Rabbinowitsch E."/>
            <person name="Rajandream M.A."/>
            <person name="Rutter S."/>
            <person name="Rutherford K.M."/>
            <person name="Sanders M."/>
            <person name="Simmonds M."/>
            <person name="Seeger K."/>
            <person name="Sharp S."/>
            <person name="Smith R."/>
            <person name="Squares R."/>
            <person name="Squares S."/>
            <person name="Stevens K."/>
            <person name="Taylor K."/>
            <person name="Tivey A."/>
            <person name="Unwin L."/>
            <person name="Whitehead S."/>
            <person name="Woodward J.R."/>
            <person name="Sulston J.E."/>
            <person name="Craig A."/>
            <person name="Newbold C."/>
            <person name="Barrell B.G."/>
        </authorList>
    </citation>
    <scope>NUCLEOTIDE SEQUENCE [LARGE SCALE GENOMIC DNA]</scope>
    <source>
        <strain>3D7</strain>
    </source>
</reference>
<reference key="4">
    <citation type="journal article" date="1997" name="J. Biol. Chem.">
        <title>Identification and characterization of the functional amino acids at the active site of the large thioredoxin reductase from Plasmodium falciparum.</title>
        <authorList>
            <person name="Gilberger T.W."/>
            <person name="Walter R.D."/>
            <person name="Mueller S."/>
        </authorList>
    </citation>
    <scope>FUNCTION</scope>
    <scope>CATALYTIC ACTIVITY</scope>
    <scope>COFACTOR</scope>
    <scope>BIOPHYSICOCHEMICAL PROPERTIES</scope>
    <scope>MUTAGENESIS OF CYS-164; CYS-169 AND HIS-585</scope>
    <scope>ACTIVE SITE</scope>
</reference>
<reference key="5">
    <citation type="journal article" date="2000" name="J. Biol. Chem.">
        <title>The thioredoxin system of the malaria parasite Plasmodium falciparum. Glutathione reduction revisited.</title>
        <authorList>
            <person name="Kanzok S.M."/>
            <person name="Schirmer R.H."/>
            <person name="Turbachova I."/>
            <person name="Iozef R."/>
            <person name="Becker K."/>
        </authorList>
    </citation>
    <scope>FUNCTION</scope>
    <scope>CATALYTIC ACTIVITY</scope>
    <scope>BIOPHYSICOCHEMICAL PROPERTIES</scope>
</reference>
<reference key="6">
    <citation type="journal article" date="2010" name="PLoS Pathog.">
        <title>Compartmentation of redox metabolism in malaria parasites.</title>
        <authorList>
            <person name="Kehr S."/>
            <person name="Sturm N."/>
            <person name="Rahlfs S."/>
            <person name="Przyborski J.M."/>
            <person name="Becker K."/>
        </authorList>
    </citation>
    <scope>SUBCELLULAR LOCATION</scope>
    <scope>ALTERNATIVE INITIATION</scope>
</reference>
<reference evidence="13" key="7">
    <citation type="journal article" date="2012" name="Biochem. Biophys. Res. Commun.">
        <title>Crystal structure of Plasmodium falciparum thioredoxin reductase, a validated drug target.</title>
        <authorList>
            <person name="Boumis G."/>
            <person name="Giardina G."/>
            <person name="Angelucci F."/>
            <person name="Bellelli A."/>
            <person name="Brunori M."/>
            <person name="Dimastrogiovanni D."/>
            <person name="Saccoccia F."/>
            <person name="Miele A.E."/>
        </authorList>
    </citation>
    <scope>X-RAY CRYSTALLOGRAPHY (2.90 ANGSTROMS) OF 77-617 IN COMPLEX WITH FAD</scope>
    <scope>CATALYTIC ACTIVITY</scope>
    <scope>COFACTOR</scope>
    <scope>DISULFIDE BOND</scope>
</reference>
<reference evidence="14 15" key="8">
    <citation type="journal article" date="2013" name="J. Mol. Biol.">
        <title>Crystal structure of the Plasmodium falciparum thioredoxin reductase-thioredoxin complex.</title>
        <authorList>
            <person name="Fritz-Wolf K."/>
            <person name="Jortzik E."/>
            <person name="Stumpf M."/>
            <person name="Preuss J."/>
            <person name="Iozef R."/>
            <person name="Rahlfs S."/>
            <person name="Becker K."/>
        </authorList>
    </citation>
    <scope>X-RAY CRYSTALLOGRAPHY (2.37 ANGSTROMS) OF 77-617 OF MUTANT SER-611 AND MUTANT SER-616 IN COMPLEX WITH FAD AND TRX1</scope>
    <scope>FUNCTION</scope>
    <scope>CATALYTIC ACTIVITY</scope>
    <scope>COFACTOR</scope>
    <scope>BIOPHYSICOCHEMICAL PROPERTIES</scope>
    <scope>SUBUNIT</scope>
    <scope>DISULFIDE BONDS</scope>
    <scope>MUTAGENESIS OF PHE-219; GLU-450; 514-HIS--LEU-528; HIS-514 AND ASP-529</scope>
</reference>
<proteinExistence type="evidence at protein level"/>
<gene>
    <name evidence="8" type="primary">TRXR</name>
    <name type="ORF">PF3D7_0923800</name>
    <name type="ORF">PFI1170c</name>
</gene>
<comment type="function">
    <text evidence="1 2 5 6">Catalyzes the transfer of electrons from NADPH to thioredoxins TRX1, TRX2 and TRX3, which in turn act as reductants of disulfide containing proteins (PubMed:11013257, PubMed:16910770, PubMed:23845423, PubMed:9368022). Able to reduce nitroglutathione (GSNO), a compound involved in the transport of nitric oxide (NO); however, TRX1 is more efficient in reducing GSNO (PubMed:11013257). Has no catalytic activity towards oxidized glutathione (GSSG) (PubMed:11013257).</text>
</comment>
<comment type="catalytic activity">
    <reaction evidence="1 2 4 5 6">
        <text>[thioredoxin]-dithiol + NADP(+) = [thioredoxin]-disulfide + NADPH + H(+)</text>
        <dbReference type="Rhea" id="RHEA:20345"/>
        <dbReference type="Rhea" id="RHEA-COMP:10698"/>
        <dbReference type="Rhea" id="RHEA-COMP:10700"/>
        <dbReference type="ChEBI" id="CHEBI:15378"/>
        <dbReference type="ChEBI" id="CHEBI:29950"/>
        <dbReference type="ChEBI" id="CHEBI:50058"/>
        <dbReference type="ChEBI" id="CHEBI:57783"/>
        <dbReference type="ChEBI" id="CHEBI:58349"/>
        <dbReference type="EC" id="1.8.1.9"/>
    </reaction>
    <physiologicalReaction direction="right-to-left" evidence="1 5 6">
        <dbReference type="Rhea" id="RHEA:20347"/>
    </physiologicalReaction>
</comment>
<comment type="cofactor">
    <cofactor evidence="5 6">
        <name>FAD</name>
        <dbReference type="ChEBI" id="CHEBI:57692"/>
    </cofactor>
    <text evidence="4 5">Binds 1 FAD per subunit.</text>
</comment>
<comment type="biophysicochemical properties">
    <kinetics>
        <KM evidence="5">8.94 uM for TRX1 (at pH 7.4)</KM>
        <KM evidence="1">10.4 uM for TRX1 (at 25 degrees Celsius and pH 7.4)</KM>
        <KM evidence="1">35 uM for nitrosoglutathione (GSNO) (at 25 degrees Celsius and pH 7.4)</KM>
        <KM evidence="6">9 uM for NADPH (at 20 degrees Celsius, pH 7.4 and the model substrate 5,5'-dithiobis (2-nitrobenzoate) (DTNB) as cosubstrate)</KM>
        <KM evidence="1">2.8 uM for NADPH (at 25 degrees Celsius, pH 7.4 and TRX1 as cosubstrate)</KM>
        <Vmax evidence="1">50.8 umol/min/mg enzyme toward TRX1 (at 25 degrees Celsius and pH 7.4)</Vmax>
        <Vmax evidence="5">29.8 umol/min/mg enzyme (at pH 7.4)</Vmax>
        <text evidence="1 5 6">kcat is 1725 min(-1) with TRX1 as substrate (at pH 7.4) (PubMed:23845423). kcat is 51.7 sec(-1) with TRX1 as substrate (at 25 degrees Celsius and at pH 7.4) (PubMed:23845423). kcat is 275.2 min(-1) with NADPH and DTNB as substrates (at pH 7.4) (PubMed:9368022). kcat is 48.3 sec(-1) with NADPH and TRX1 as substrates (at 25 degrees Celsius and at pH 7.4) (PubMed:11013257). kcat is 9.4 min(-1) with nitrosoglutathione (GSNO) as substrates (at 25 degrees Celsius and at pH 7.4) (PubMed:11013257).</text>
    </kinetics>
</comment>
<comment type="subunit">
    <text evidence="12">Homodimer.</text>
</comment>
<comment type="subcellular location">
    <molecule>Isoform 1</molecule>
    <subcellularLocation>
        <location evidence="3">Mitochondrion</location>
    </subcellularLocation>
</comment>
<comment type="subcellular location">
    <molecule>Isoform 2</molecule>
    <subcellularLocation>
        <location evidence="3">Cytoplasm</location>
    </subcellularLocation>
</comment>
<comment type="alternative products">
    <event type="alternative initiation"/>
    <isoform>
        <id>P61076-1</id>
        <name>1</name>
        <sequence type="displayed"/>
    </isoform>
    <isoform>
        <id>P61076-2</id>
        <name>2</name>
        <name evidence="7">TrxR2</name>
        <sequence type="described" ref="VSP_061463"/>
    </isoform>
</comment>
<comment type="miscellaneous">
    <molecule>Isoform 2</molecule>
    <text evidence="3">Produced by alternative initiation at Met-77 of isoform 1.</text>
</comment>
<comment type="miscellaneous">
    <text evidence="11">In Plasmodium, the C-terminal redox center, which acts as the active site, is formed by two cysteines while in mammalian TRXR this redox center is composed of a cysteine-selenocysteine active site.</text>
</comment>
<comment type="similarity">
    <text evidence="9">Belongs to the class-I pyridine nucleotide-disulfide oxidoreductase family.</text>
</comment>
<sequence length="617" mass="68698">MNNVISFIGNSSNKYFQINQLHFIRIINKNIHSKNNLINSNSSYNVFYNKYFIKNTFQNKNKLSSIYSKLNFSIKNMCKDKNEKKNYEHVNANEKNGYLASEKNELTKNKVEEHTYDYDYVVIGGGPGGMASAKEAAAHGARVLLFDYVKPSSQGTKWGIGGTCVNVGCVPKKLMHYAGHMGSIFKLDSKAYGWKFDNLKHDWKKLVTTVQSHIRSLNFSYMTGLRSSKVKYINGLAKLKDKNTVSYYLKGDLSKEETVTGKYILIATGCRPHIPDDVEGAKELSITSDDIFSLKKDPGKTLVVGASYVALECSGFLNSLGYDVTVAVRSIVLRGFDQQCAVKVKLYMEEQGVMFKNGILPKKLTKMDDKILVEFSDKTSELYDTVLYAIGRKGDIDGLNLESLNMNVNKSNNKIIADHLSCTNIPSIFAVGDVAENVPELAPVAIKAGEILARRLFKDSDEIMDYSYIPTSIYTPIEYGACGYSEEKAYELYGKSNVEVFLQEFNNLEISAVHRQKHIRAQKDEYDLDVSSTCLAKLVCLKNEDNRVIGFHYVGPNAGEVTQGMALALRLKVKKKDFDNCIGIHPTDAESFMNLFVTISSGLSYAAKGGCGGGKCG</sequence>
<feature type="transit peptide" description="Mitochondrion" evidence="10">
    <location>
        <begin position="1"/>
        <end status="unknown"/>
    </location>
</feature>
<feature type="chain" id="PRO_0000067987" description="Thioredoxin reductase">
    <location>
        <begin status="unknown"/>
        <end position="617"/>
    </location>
</feature>
<feature type="region of interest" description="Loop important for the interaction with TRX1" evidence="5">
    <location>
        <begin position="514"/>
        <end position="528"/>
    </location>
</feature>
<feature type="active site" description="Proton acceptor" evidence="6">
    <location>
        <position position="585"/>
    </location>
</feature>
<feature type="binding site" description="in other chain" evidence="4 5 13 14 15">
    <location>
        <begin position="127"/>
        <end position="128"/>
    </location>
    <ligand>
        <name>FAD</name>
        <dbReference type="ChEBI" id="CHEBI:57692"/>
        <note>ligand shared between dimeric partners</note>
    </ligand>
</feature>
<feature type="binding site" description="in other chain" evidence="4 5 13 14 15">
    <location>
        <begin position="147"/>
        <end position="150"/>
    </location>
    <ligand>
        <name>FAD</name>
        <dbReference type="ChEBI" id="CHEBI:57692"/>
        <note>ligand shared between dimeric partners</note>
    </ligand>
</feature>
<feature type="binding site" description="in other chain" evidence="4 5 13 14 15">
    <location>
        <begin position="163"/>
        <end position="164"/>
    </location>
    <ligand>
        <name>FAD</name>
        <dbReference type="ChEBI" id="CHEBI:57692"/>
        <note>ligand shared between dimeric partners</note>
    </ligand>
</feature>
<feature type="binding site" description="in other chain" evidence="4 5 13 14 15">
    <location>
        <begin position="168"/>
        <end position="172"/>
    </location>
    <ligand>
        <name>FAD</name>
        <dbReference type="ChEBI" id="CHEBI:57692"/>
        <note>ligand shared between dimeric partners</note>
    </ligand>
</feature>
<feature type="binding site" description="in other chain" evidence="4 5 13 14 15">
    <location>
        <position position="237"/>
    </location>
    <ligand>
        <name>FAD</name>
        <dbReference type="ChEBI" id="CHEBI:57692"/>
        <note>ligand shared between dimeric partners</note>
    </ligand>
</feature>
<feature type="binding site" description="in other chain" evidence="4 5 13 14 15">
    <location>
        <position position="433"/>
    </location>
    <ligand>
        <name>FAD</name>
        <dbReference type="ChEBI" id="CHEBI:57692"/>
        <note>ligand shared between dimeric partners</note>
    </ligand>
</feature>
<feature type="binding site" description="in other chain" evidence="4 5 13 14 15">
    <location>
        <begin position="440"/>
        <end position="442"/>
    </location>
    <ligand>
        <name>FAD</name>
        <dbReference type="ChEBI" id="CHEBI:57692"/>
        <note>ligand shared between dimeric partners</note>
    </ligand>
</feature>
<feature type="binding site" evidence="5 14 15">
    <location>
        <position position="585"/>
    </location>
    <ligand>
        <name>FAD</name>
        <dbReference type="ChEBI" id="CHEBI:57692"/>
        <note>ligand shared between dimeric partners</note>
    </ligand>
</feature>
<feature type="disulfide bond" description="Redox-active" evidence="4 5 6 13 14 15">
    <location>
        <begin position="164"/>
        <end position="169"/>
    </location>
</feature>
<feature type="disulfide bond" description="Redox-active" evidence="5 14 15">
    <location>
        <begin position="611"/>
        <end position="616"/>
    </location>
</feature>
<feature type="splice variant" id="VSP_061463" description="In isoform 2." evidence="9">
    <location>
        <begin position="1"/>
        <end position="76"/>
    </location>
</feature>
<feature type="mutagenesis site" description="Loss of catalytic activity." evidence="6">
    <original>C</original>
    <variation>A</variation>
    <variation>S</variation>
    <location>
        <position position="164"/>
    </location>
</feature>
<feature type="mutagenesis site" description="Loss of catalytic activity." evidence="6">
    <original>C</original>
    <variation>A</variation>
    <location>
        <position position="169"/>
    </location>
</feature>
<feature type="mutagenesis site" description="12-fold reduction in affinity for TRX1 and 25-fold decrease in catalytic efficiency." evidence="5">
    <original>F</original>
    <variation>S</variation>
    <location>
        <position position="219"/>
    </location>
</feature>
<feature type="mutagenesis site" description="No effect on catalytic activity." evidence="5">
    <original>E</original>
    <variation>S</variation>
    <location>
        <position position="450"/>
    </location>
</feature>
<feature type="mutagenesis site" description="7-fold reduction in affinity for TRX1 and 16-fold decrease in catalytic efficiency." evidence="5">
    <location>
        <begin position="514"/>
        <end position="528"/>
    </location>
</feature>
<feature type="mutagenesis site" description="No effect on affinity for TRX1 and 2-fold decrease in catalytic efficiency." evidence="5">
    <original>H</original>
    <variation>A</variation>
    <location>
        <position position="514"/>
    </location>
</feature>
<feature type="mutagenesis site" description="No effect on catalytic activity." evidence="5">
    <original>D</original>
    <variation>A</variation>
    <location>
        <position position="529"/>
    </location>
</feature>
<feature type="mutagenesis site" description="Severe loss of catalytic activity." evidence="6">
    <original>H</original>
    <variation>Q</variation>
    <variation>A</variation>
    <location>
        <position position="585"/>
    </location>
</feature>
<feature type="strand" evidence="16">
    <location>
        <begin position="117"/>
        <end position="123"/>
    </location>
</feature>
<feature type="helix" evidence="16">
    <location>
        <begin position="127"/>
        <end position="137"/>
    </location>
</feature>
<feature type="turn" evidence="16">
    <location>
        <begin position="138"/>
        <end position="140"/>
    </location>
</feature>
<feature type="strand" evidence="16">
    <location>
        <begin position="143"/>
        <end position="146"/>
    </location>
</feature>
<feature type="helix" evidence="16">
    <location>
        <begin position="162"/>
        <end position="167"/>
    </location>
</feature>
<feature type="helix" evidence="16">
    <location>
        <begin position="169"/>
        <end position="187"/>
    </location>
</feature>
<feature type="turn" evidence="16">
    <location>
        <begin position="188"/>
        <end position="193"/>
    </location>
</feature>
<feature type="strand" evidence="16">
    <location>
        <begin position="194"/>
        <end position="201"/>
    </location>
</feature>
<feature type="helix" evidence="16">
    <location>
        <begin position="203"/>
        <end position="227"/>
    </location>
</feature>
<feature type="strand" evidence="16">
    <location>
        <begin position="231"/>
        <end position="233"/>
    </location>
</feature>
<feature type="strand" evidence="16">
    <location>
        <begin position="235"/>
        <end position="241"/>
    </location>
</feature>
<feature type="strand" evidence="16">
    <location>
        <begin position="244"/>
        <end position="249"/>
    </location>
</feature>
<feature type="strand" evidence="16">
    <location>
        <begin position="257"/>
        <end position="266"/>
    </location>
</feature>
<feature type="strand" evidence="16">
    <location>
        <begin position="270"/>
        <end position="272"/>
    </location>
</feature>
<feature type="strand" evidence="16">
    <location>
        <begin position="276"/>
        <end position="279"/>
    </location>
</feature>
<feature type="helix" evidence="16">
    <location>
        <begin position="281"/>
        <end position="284"/>
    </location>
</feature>
<feature type="helix" evidence="16">
    <location>
        <begin position="288"/>
        <end position="291"/>
    </location>
</feature>
<feature type="strand" evidence="16">
    <location>
        <begin position="300"/>
        <end position="304"/>
    </location>
</feature>
<feature type="helix" evidence="16">
    <location>
        <begin position="308"/>
        <end position="320"/>
    </location>
</feature>
<feature type="strand" evidence="16">
    <location>
        <begin position="324"/>
        <end position="330"/>
    </location>
</feature>
<feature type="helix" evidence="16">
    <location>
        <begin position="338"/>
        <end position="349"/>
    </location>
</feature>
<feature type="turn" evidence="16">
    <location>
        <begin position="350"/>
        <end position="352"/>
    </location>
</feature>
<feature type="strand" evidence="16">
    <location>
        <begin position="354"/>
        <end position="357"/>
    </location>
</feature>
<feature type="strand" evidence="16">
    <location>
        <begin position="361"/>
        <end position="367"/>
    </location>
</feature>
<feature type="strand" evidence="16">
    <location>
        <begin position="370"/>
        <end position="375"/>
    </location>
</feature>
<feature type="strand" evidence="16">
    <location>
        <begin position="380"/>
        <end position="388"/>
    </location>
</feature>
<feature type="strand" evidence="16">
    <location>
        <begin position="392"/>
        <end position="395"/>
    </location>
</feature>
<feature type="helix" evidence="16">
    <location>
        <begin position="397"/>
        <end position="399"/>
    </location>
</feature>
<feature type="helix" evidence="16">
    <location>
        <begin position="401"/>
        <end position="404"/>
    </location>
</feature>
<feature type="turn" evidence="16">
    <location>
        <begin position="410"/>
        <end position="413"/>
    </location>
</feature>
<feature type="strand" evidence="16">
    <location>
        <begin position="428"/>
        <end position="430"/>
    </location>
</feature>
<feature type="helix" evidence="16">
    <location>
        <begin position="432"/>
        <end position="434"/>
    </location>
</feature>
<feature type="helix" evidence="16">
    <location>
        <begin position="442"/>
        <end position="457"/>
    </location>
</feature>
<feature type="strand" evidence="16">
    <location>
        <begin position="471"/>
        <end position="473"/>
    </location>
</feature>
<feature type="strand" evidence="16">
    <location>
        <begin position="475"/>
        <end position="483"/>
    </location>
</feature>
<feature type="helix" evidence="16">
    <location>
        <begin position="486"/>
        <end position="493"/>
    </location>
</feature>
<feature type="helix" evidence="16">
    <location>
        <begin position="495"/>
        <end position="497"/>
    </location>
</feature>
<feature type="strand" evidence="16">
    <location>
        <begin position="498"/>
        <end position="505"/>
    </location>
</feature>
<feature type="helix" evidence="16">
    <location>
        <begin position="508"/>
        <end position="511"/>
    </location>
</feature>
<feature type="helix" evidence="16">
    <location>
        <begin position="519"/>
        <end position="521"/>
    </location>
</feature>
<feature type="strand" evidence="16">
    <location>
        <begin position="534"/>
        <end position="541"/>
    </location>
</feature>
<feature type="helix" evidence="16">
    <location>
        <begin position="542"/>
        <end position="544"/>
    </location>
</feature>
<feature type="strand" evidence="16">
    <location>
        <begin position="547"/>
        <end position="555"/>
    </location>
</feature>
<feature type="helix" evidence="16">
    <location>
        <begin position="558"/>
        <end position="570"/>
    </location>
</feature>
<feature type="helix" evidence="16">
    <location>
        <begin position="575"/>
        <end position="580"/>
    </location>
</feature>
<feature type="helix" evidence="16">
    <location>
        <begin position="589"/>
        <end position="594"/>
    </location>
</feature>
<feature type="turn" evidence="16">
    <location>
        <begin position="599"/>
        <end position="601"/>
    </location>
</feature>
<feature type="strand" evidence="16">
    <location>
        <begin position="609"/>
        <end position="611"/>
    </location>
</feature>
<organism>
    <name type="scientific">Plasmodium falciparum (isolate 3D7)</name>
    <dbReference type="NCBI Taxonomy" id="36329"/>
    <lineage>
        <taxon>Eukaryota</taxon>
        <taxon>Sar</taxon>
        <taxon>Alveolata</taxon>
        <taxon>Apicomplexa</taxon>
        <taxon>Aconoidasida</taxon>
        <taxon>Haemosporida</taxon>
        <taxon>Plasmodiidae</taxon>
        <taxon>Plasmodium</taxon>
        <taxon>Plasmodium (Laverania)</taxon>
    </lineage>
</organism>
<evidence type="ECO:0000269" key="1">
    <source>
    </source>
</evidence>
<evidence type="ECO:0000269" key="2">
    <source>
    </source>
</evidence>
<evidence type="ECO:0000269" key="3">
    <source>
    </source>
</evidence>
<evidence type="ECO:0000269" key="4">
    <source>
    </source>
</evidence>
<evidence type="ECO:0000269" key="5">
    <source>
    </source>
</evidence>
<evidence type="ECO:0000269" key="6">
    <source>
    </source>
</evidence>
<evidence type="ECO:0000303" key="7">
    <source>
    </source>
</evidence>
<evidence type="ECO:0000303" key="8">
    <source>
    </source>
</evidence>
<evidence type="ECO:0000305" key="9"/>
<evidence type="ECO:0000305" key="10">
    <source>
    </source>
</evidence>
<evidence type="ECO:0000305" key="11">
    <source>
    </source>
</evidence>
<evidence type="ECO:0000305" key="12">
    <source>
    </source>
</evidence>
<evidence type="ECO:0007744" key="13">
    <source>
        <dbReference type="PDB" id="4B1B"/>
    </source>
</evidence>
<evidence type="ECO:0007744" key="14">
    <source>
        <dbReference type="PDB" id="4J56"/>
    </source>
</evidence>
<evidence type="ECO:0007744" key="15">
    <source>
        <dbReference type="PDB" id="4J57"/>
    </source>
</evidence>
<evidence type="ECO:0007829" key="16">
    <source>
        <dbReference type="PDB" id="4J56"/>
    </source>
</evidence>
<name>TRXR_PLAF7</name>
<accession>P61076</accession>
<accession>A0A143ZVU1</accession>
<accession>Q71G50</accession>
<keyword id="KW-0002">3D-structure</keyword>
<keyword id="KW-0024">Alternative initiation</keyword>
<keyword id="KW-0963">Cytoplasm</keyword>
<keyword id="KW-1015">Disulfide bond</keyword>
<keyword id="KW-0274">FAD</keyword>
<keyword id="KW-0285">Flavoprotein</keyword>
<keyword id="KW-0496">Mitochondrion</keyword>
<keyword id="KW-0521">NADP</keyword>
<keyword id="KW-0560">Oxidoreductase</keyword>
<keyword id="KW-0676">Redox-active center</keyword>
<keyword id="KW-1185">Reference proteome</keyword>
<keyword id="KW-0809">Transit peptide</keyword>
<dbReference type="EC" id="1.8.1.9" evidence="1 2 4 5 6"/>
<dbReference type="EMBL" id="AF508128">
    <property type="protein sequence ID" value="AAQ07981.1"/>
    <property type="molecule type" value="mRNA"/>
</dbReference>
<dbReference type="EMBL" id="AL844508">
    <property type="protein sequence ID" value="CAX64232.1"/>
    <property type="molecule type" value="Genomic_DNA"/>
</dbReference>
<dbReference type="EMBL" id="AL844508">
    <property type="protein sequence ID" value="CZT62537.1"/>
    <property type="molecule type" value="Genomic_DNA"/>
</dbReference>
<dbReference type="RefSeq" id="XP_002808951.1">
    <molecule id="P61076-1"/>
    <property type="nucleotide sequence ID" value="XM_002808905.1"/>
</dbReference>
<dbReference type="PDB" id="4B1B">
    <property type="method" value="X-ray"/>
    <property type="resolution" value="2.90 A"/>
    <property type="chains" value="A/B=77-617"/>
</dbReference>
<dbReference type="PDB" id="4J56">
    <property type="method" value="X-ray"/>
    <property type="resolution" value="2.37 A"/>
    <property type="chains" value="A/B/C/D=77-617"/>
</dbReference>
<dbReference type="PDB" id="4J57">
    <property type="method" value="X-ray"/>
    <property type="resolution" value="2.50 A"/>
    <property type="chains" value="A/B=77-615"/>
</dbReference>
<dbReference type="PDBsum" id="4B1B"/>
<dbReference type="PDBsum" id="4J56"/>
<dbReference type="PDBsum" id="4J57"/>
<dbReference type="SMR" id="P61076"/>
<dbReference type="FunCoup" id="P61076">
    <property type="interactions" value="195"/>
</dbReference>
<dbReference type="STRING" id="36329.A0A143ZVU1"/>
<dbReference type="BindingDB" id="P61076"/>
<dbReference type="ChEMBL" id="CHEMBL4547"/>
<dbReference type="SwissPalm" id="P61076"/>
<dbReference type="PaxDb" id="5833-PFI1170c"/>
<dbReference type="EnsemblProtists" id="CAX64232">
    <molecule id="P61076-1"/>
    <property type="protein sequence ID" value="CAX64232"/>
    <property type="gene ID" value="PF3D7_0923800.1"/>
</dbReference>
<dbReference type="EnsemblProtists" id="CZT62537">
    <molecule id="P61076-2"/>
    <property type="protein sequence ID" value="CZT62537"/>
    <property type="gene ID" value="PF3D7_0923800.2"/>
</dbReference>
<dbReference type="KEGG" id="pfa:PF3D7_0923800.1"/>
<dbReference type="VEuPathDB" id="PlasmoDB:PF3D7_0923800"/>
<dbReference type="HOGENOM" id="CLU_016755_2_4_1"/>
<dbReference type="InParanoid" id="P61076"/>
<dbReference type="OMA" id="NYHKLAD"/>
<dbReference type="OrthoDB" id="5956163at2759"/>
<dbReference type="PhylomeDB" id="P61076"/>
<dbReference type="Reactome" id="R-PFA-3299685">
    <property type="pathway name" value="Detoxification of Reactive Oxygen Species"/>
</dbReference>
<dbReference type="Reactome" id="R-PFA-499943">
    <property type="pathway name" value="Interconversion of nucleotide di- and triphosphates"/>
</dbReference>
<dbReference type="Reactome" id="R-PFA-5263617">
    <property type="pathway name" value="Metabolism of ingested MeSeO2H into MeSeH"/>
</dbReference>
<dbReference type="Reactome" id="R-PFA-5628897">
    <property type="pathway name" value="TP53 Regulates Metabolic Genes"/>
</dbReference>
<dbReference type="EvolutionaryTrace" id="P61076"/>
<dbReference type="Proteomes" id="UP000001450">
    <property type="component" value="Chromosome 9"/>
</dbReference>
<dbReference type="GO" id="GO:0005737">
    <property type="term" value="C:cytoplasm"/>
    <property type="evidence" value="ECO:0000314"/>
    <property type="project" value="GeneDB"/>
</dbReference>
<dbReference type="GO" id="GO:0005739">
    <property type="term" value="C:mitochondrion"/>
    <property type="evidence" value="ECO:0000314"/>
    <property type="project" value="GeneDB"/>
</dbReference>
<dbReference type="GO" id="GO:0050660">
    <property type="term" value="F:flavin adenine dinucleotide binding"/>
    <property type="evidence" value="ECO:0000314"/>
    <property type="project" value="UniProtKB"/>
</dbReference>
<dbReference type="GO" id="GO:0004791">
    <property type="term" value="F:thioredoxin-disulfide reductase (NADPH) activity"/>
    <property type="evidence" value="ECO:0000314"/>
    <property type="project" value="UniProtKB"/>
</dbReference>
<dbReference type="GO" id="GO:0045454">
    <property type="term" value="P:cell redox homeostasis"/>
    <property type="evidence" value="ECO:0000318"/>
    <property type="project" value="GO_Central"/>
</dbReference>
<dbReference type="FunFam" id="3.50.50.60:FF:000190">
    <property type="entry name" value="Thioredoxin reductase"/>
    <property type="match status" value="1"/>
</dbReference>
<dbReference type="Gene3D" id="3.50.50.60">
    <property type="entry name" value="FAD/NAD(P)-binding domain"/>
    <property type="match status" value="1"/>
</dbReference>
<dbReference type="InterPro" id="IPR036188">
    <property type="entry name" value="FAD/NAD-bd_sf"/>
</dbReference>
<dbReference type="InterPro" id="IPR023753">
    <property type="entry name" value="FAD/NAD-binding_dom"/>
</dbReference>
<dbReference type="InterPro" id="IPR016156">
    <property type="entry name" value="FAD/NAD-linked_Rdtase_dimer_sf"/>
</dbReference>
<dbReference type="InterPro" id="IPR046952">
    <property type="entry name" value="GSHR/TRXR-like"/>
</dbReference>
<dbReference type="InterPro" id="IPR004099">
    <property type="entry name" value="Pyr_nucl-diS_OxRdtase_dimer"/>
</dbReference>
<dbReference type="InterPro" id="IPR012999">
    <property type="entry name" value="Pyr_OxRdtase_I_AS"/>
</dbReference>
<dbReference type="InterPro" id="IPR006338">
    <property type="entry name" value="Thioredoxin/glutathione_Rdtase"/>
</dbReference>
<dbReference type="NCBIfam" id="TIGR01438">
    <property type="entry name" value="TGR"/>
    <property type="match status" value="1"/>
</dbReference>
<dbReference type="PANTHER" id="PTHR42737">
    <property type="entry name" value="GLUTATHIONE REDUCTASE"/>
    <property type="match status" value="1"/>
</dbReference>
<dbReference type="PANTHER" id="PTHR42737:SF2">
    <property type="entry name" value="GLUTATHIONE REDUCTASE"/>
    <property type="match status" value="1"/>
</dbReference>
<dbReference type="Pfam" id="PF07992">
    <property type="entry name" value="Pyr_redox_2"/>
    <property type="match status" value="1"/>
</dbReference>
<dbReference type="Pfam" id="PF02852">
    <property type="entry name" value="Pyr_redox_dim"/>
    <property type="match status" value="1"/>
</dbReference>
<dbReference type="PRINTS" id="PR00368">
    <property type="entry name" value="FADPNR"/>
</dbReference>
<dbReference type="PRINTS" id="PR00411">
    <property type="entry name" value="PNDRDTASEI"/>
</dbReference>
<dbReference type="SUPFAM" id="SSF51905">
    <property type="entry name" value="FAD/NAD(P)-binding domain"/>
    <property type="match status" value="1"/>
</dbReference>
<dbReference type="SUPFAM" id="SSF55424">
    <property type="entry name" value="FAD/NAD-linked reductases, dimerisation (C-terminal) domain"/>
    <property type="match status" value="1"/>
</dbReference>
<dbReference type="PROSITE" id="PS00076">
    <property type="entry name" value="PYRIDINE_REDOX_1"/>
    <property type="match status" value="1"/>
</dbReference>
<protein>
    <recommendedName>
        <fullName evidence="8">Thioredoxin reductase</fullName>
        <shortName evidence="8">PfTrxR</shortName>
        <ecNumber evidence="1 2 4 5 6">1.8.1.9</ecNumber>
    </recommendedName>
</protein>